<dbReference type="EC" id="4.1.1.37" evidence="1"/>
<dbReference type="EMBL" id="CP001279">
    <property type="protein sequence ID" value="ACM92401.1"/>
    <property type="molecule type" value="Genomic_DNA"/>
</dbReference>
<dbReference type="RefSeq" id="WP_012663772.1">
    <property type="nucleotide sequence ID" value="NC_012115.1"/>
</dbReference>
<dbReference type="SMR" id="B9L8M1"/>
<dbReference type="STRING" id="598659.NAMH_0563"/>
<dbReference type="KEGG" id="nam:NAMH_0563"/>
<dbReference type="eggNOG" id="COG0407">
    <property type="taxonomic scope" value="Bacteria"/>
</dbReference>
<dbReference type="HOGENOM" id="CLU_040933_0_0_7"/>
<dbReference type="OrthoDB" id="9806656at2"/>
<dbReference type="UniPathway" id="UPA00251">
    <property type="reaction ID" value="UER00321"/>
</dbReference>
<dbReference type="Proteomes" id="UP000000448">
    <property type="component" value="Chromosome"/>
</dbReference>
<dbReference type="GO" id="GO:0005829">
    <property type="term" value="C:cytosol"/>
    <property type="evidence" value="ECO:0007669"/>
    <property type="project" value="TreeGrafter"/>
</dbReference>
<dbReference type="GO" id="GO:0004853">
    <property type="term" value="F:uroporphyrinogen decarboxylase activity"/>
    <property type="evidence" value="ECO:0007669"/>
    <property type="project" value="UniProtKB-UniRule"/>
</dbReference>
<dbReference type="GO" id="GO:0019353">
    <property type="term" value="P:protoporphyrinogen IX biosynthetic process from glutamate"/>
    <property type="evidence" value="ECO:0007669"/>
    <property type="project" value="TreeGrafter"/>
</dbReference>
<dbReference type="CDD" id="cd00717">
    <property type="entry name" value="URO-D"/>
    <property type="match status" value="1"/>
</dbReference>
<dbReference type="FunFam" id="3.20.20.210:FF:000007">
    <property type="entry name" value="Uroporphyrinogen decarboxylase"/>
    <property type="match status" value="1"/>
</dbReference>
<dbReference type="Gene3D" id="3.20.20.210">
    <property type="match status" value="1"/>
</dbReference>
<dbReference type="HAMAP" id="MF_00218">
    <property type="entry name" value="URO_D"/>
    <property type="match status" value="1"/>
</dbReference>
<dbReference type="InterPro" id="IPR038071">
    <property type="entry name" value="UROD/MetE-like_sf"/>
</dbReference>
<dbReference type="InterPro" id="IPR006361">
    <property type="entry name" value="Uroporphyrinogen_deCO2ase_HemE"/>
</dbReference>
<dbReference type="InterPro" id="IPR000257">
    <property type="entry name" value="Uroporphyrinogen_deCOase"/>
</dbReference>
<dbReference type="NCBIfam" id="TIGR01464">
    <property type="entry name" value="hemE"/>
    <property type="match status" value="1"/>
</dbReference>
<dbReference type="PANTHER" id="PTHR21091">
    <property type="entry name" value="METHYLTETRAHYDROFOLATE:HOMOCYSTEINE METHYLTRANSFERASE RELATED"/>
    <property type="match status" value="1"/>
</dbReference>
<dbReference type="PANTHER" id="PTHR21091:SF169">
    <property type="entry name" value="UROPORPHYRINOGEN DECARBOXYLASE"/>
    <property type="match status" value="1"/>
</dbReference>
<dbReference type="Pfam" id="PF01208">
    <property type="entry name" value="URO-D"/>
    <property type="match status" value="1"/>
</dbReference>
<dbReference type="SUPFAM" id="SSF51726">
    <property type="entry name" value="UROD/MetE-like"/>
    <property type="match status" value="1"/>
</dbReference>
<dbReference type="PROSITE" id="PS00906">
    <property type="entry name" value="UROD_1"/>
    <property type="match status" value="1"/>
</dbReference>
<dbReference type="PROSITE" id="PS00907">
    <property type="entry name" value="UROD_2"/>
    <property type="match status" value="1"/>
</dbReference>
<name>DCUP_NAUPA</name>
<reference key="1">
    <citation type="journal article" date="2009" name="PLoS Genet.">
        <title>Adaptations to submarine hydrothermal environments exemplified by the genome of Nautilia profundicola.</title>
        <authorList>
            <person name="Campbell B.J."/>
            <person name="Smith J.L."/>
            <person name="Hanson T.E."/>
            <person name="Klotz M.G."/>
            <person name="Stein L.Y."/>
            <person name="Lee C.K."/>
            <person name="Wu D."/>
            <person name="Robinson J.M."/>
            <person name="Khouri H.M."/>
            <person name="Eisen J.A."/>
            <person name="Cary S.C."/>
        </authorList>
    </citation>
    <scope>NUCLEOTIDE SEQUENCE [LARGE SCALE GENOMIC DNA]</scope>
    <source>
        <strain>ATCC BAA-1463 / DSM 18972 / AmH</strain>
    </source>
</reference>
<proteinExistence type="inferred from homology"/>
<protein>
    <recommendedName>
        <fullName evidence="1">Uroporphyrinogen decarboxylase</fullName>
        <shortName evidence="1">UPD</shortName>
        <shortName evidence="1">URO-D</shortName>
        <ecNumber evidence="1">4.1.1.37</ecNumber>
    </recommendedName>
</protein>
<organism>
    <name type="scientific">Nautilia profundicola (strain ATCC BAA-1463 / DSM 18972 / AmH)</name>
    <dbReference type="NCBI Taxonomy" id="598659"/>
    <lineage>
        <taxon>Bacteria</taxon>
        <taxon>Pseudomonadati</taxon>
        <taxon>Campylobacterota</taxon>
        <taxon>Epsilonproteobacteria</taxon>
        <taxon>Nautiliales</taxon>
        <taxon>Nautiliaceae</taxon>
        <taxon>Nautilia</taxon>
    </lineage>
</organism>
<feature type="chain" id="PRO_1000197531" description="Uroporphyrinogen decarboxylase">
    <location>
        <begin position="1"/>
        <end position="340"/>
    </location>
</feature>
<feature type="binding site" evidence="1">
    <location>
        <begin position="21"/>
        <end position="25"/>
    </location>
    <ligand>
        <name>substrate</name>
    </ligand>
</feature>
<feature type="binding site" evidence="1">
    <location>
        <position position="71"/>
    </location>
    <ligand>
        <name>substrate</name>
    </ligand>
</feature>
<feature type="binding site" evidence="1">
    <location>
        <position position="147"/>
    </location>
    <ligand>
        <name>substrate</name>
    </ligand>
</feature>
<feature type="binding site" evidence="1">
    <location>
        <position position="202"/>
    </location>
    <ligand>
        <name>substrate</name>
    </ligand>
</feature>
<feature type="binding site" evidence="1">
    <location>
        <position position="315"/>
    </location>
    <ligand>
        <name>substrate</name>
    </ligand>
</feature>
<feature type="site" description="Transition state stabilizer" evidence="1">
    <location>
        <position position="71"/>
    </location>
</feature>
<comment type="function">
    <text evidence="1">Catalyzes the decarboxylation of four acetate groups of uroporphyrinogen-III to yield coproporphyrinogen-III.</text>
</comment>
<comment type="catalytic activity">
    <reaction evidence="1">
        <text>uroporphyrinogen III + 4 H(+) = coproporphyrinogen III + 4 CO2</text>
        <dbReference type="Rhea" id="RHEA:19865"/>
        <dbReference type="ChEBI" id="CHEBI:15378"/>
        <dbReference type="ChEBI" id="CHEBI:16526"/>
        <dbReference type="ChEBI" id="CHEBI:57308"/>
        <dbReference type="ChEBI" id="CHEBI:57309"/>
        <dbReference type="EC" id="4.1.1.37"/>
    </reaction>
</comment>
<comment type="pathway">
    <text evidence="1">Porphyrin-containing compound metabolism; protoporphyrin-IX biosynthesis; coproporphyrinogen-III from 5-aminolevulinate: step 4/4.</text>
</comment>
<comment type="subunit">
    <text evidence="1">Homodimer.</text>
</comment>
<comment type="subcellular location">
    <subcellularLocation>
        <location evidence="1">Cytoplasm</location>
    </subcellularLocation>
</comment>
<comment type="similarity">
    <text evidence="1">Belongs to the uroporphyrinogen decarboxylase family.</text>
</comment>
<evidence type="ECO:0000255" key="1">
    <source>
        <dbReference type="HAMAP-Rule" id="MF_00218"/>
    </source>
</evidence>
<keyword id="KW-0963">Cytoplasm</keyword>
<keyword id="KW-0210">Decarboxylase</keyword>
<keyword id="KW-0456">Lyase</keyword>
<keyword id="KW-0627">Porphyrin biosynthesis</keyword>
<accession>B9L8M1</accession>
<gene>
    <name evidence="1" type="primary">hemE</name>
    <name type="ordered locus">NAMH_0563</name>
</gene>
<sequence length="340" mass="38857">MIFVDACFGKETEYTPVWMMRQAGRYLPEYMEVRRKIGNFLDMTRNPEVVAEVTIQPIDILDVDAAILFSDILNLPMEMGLPLRFEKGVGPVFDKTIDTEEDIEALDSSADEKLEYVYKGVKLIRERLPEEKALIGFAGSPWTIATYMVEGRGSKQYAKIKKMVYSNPMMLHRLLAFNTKETIEYLSKQIDAGANAVMVFDSWGGALEKEKFFEFSWNYMKEIAKNIKAKYPHIPVILFSKGVGLYMDEMDGEFDVVGVDWATPIDHALRIFKDNYTLQGNMEPTRLYSKTATKEAVEKIAGIMKGHRHIFNLGHGILPDVPVENAKYFVNLCKELTRRG</sequence>